<evidence type="ECO:0000255" key="1">
    <source>
        <dbReference type="HAMAP-Rule" id="MF_01858"/>
    </source>
</evidence>
<protein>
    <recommendedName>
        <fullName evidence="1">Ribosomal RNA large subunit methyltransferase K/L</fullName>
    </recommendedName>
    <domain>
        <recommendedName>
            <fullName evidence="1">23S rRNA m2G2445 methyltransferase</fullName>
            <ecNumber evidence="1">2.1.1.173</ecNumber>
        </recommendedName>
        <alternativeName>
            <fullName evidence="1">rRNA (guanine-N(2)-)-methyltransferase RlmL</fullName>
        </alternativeName>
    </domain>
    <domain>
        <recommendedName>
            <fullName evidence="1">23S rRNA m7G2069 methyltransferase</fullName>
            <ecNumber evidence="1">2.1.1.264</ecNumber>
        </recommendedName>
        <alternativeName>
            <fullName evidence="1">rRNA (guanine-N(7)-)-methyltransferase RlmK</fullName>
        </alternativeName>
    </domain>
</protein>
<accession>B4T1Z1</accession>
<comment type="function">
    <text evidence="1">Specifically methylates the guanine in position 2445 (m2G2445) and the guanine in position 2069 (m7G2069) of 23S rRNA.</text>
</comment>
<comment type="catalytic activity">
    <reaction evidence="1">
        <text>guanosine(2445) in 23S rRNA + S-adenosyl-L-methionine = N(2)-methylguanosine(2445) in 23S rRNA + S-adenosyl-L-homocysteine + H(+)</text>
        <dbReference type="Rhea" id="RHEA:42740"/>
        <dbReference type="Rhea" id="RHEA-COMP:10215"/>
        <dbReference type="Rhea" id="RHEA-COMP:10216"/>
        <dbReference type="ChEBI" id="CHEBI:15378"/>
        <dbReference type="ChEBI" id="CHEBI:57856"/>
        <dbReference type="ChEBI" id="CHEBI:59789"/>
        <dbReference type="ChEBI" id="CHEBI:74269"/>
        <dbReference type="ChEBI" id="CHEBI:74481"/>
        <dbReference type="EC" id="2.1.1.173"/>
    </reaction>
</comment>
<comment type="catalytic activity">
    <reaction evidence="1">
        <text>guanosine(2069) in 23S rRNA + S-adenosyl-L-methionine = N(2)-methylguanosine(2069) in 23S rRNA + S-adenosyl-L-homocysteine + H(+)</text>
        <dbReference type="Rhea" id="RHEA:43772"/>
        <dbReference type="Rhea" id="RHEA-COMP:10688"/>
        <dbReference type="Rhea" id="RHEA-COMP:10689"/>
        <dbReference type="ChEBI" id="CHEBI:15378"/>
        <dbReference type="ChEBI" id="CHEBI:57856"/>
        <dbReference type="ChEBI" id="CHEBI:59789"/>
        <dbReference type="ChEBI" id="CHEBI:74269"/>
        <dbReference type="ChEBI" id="CHEBI:74481"/>
        <dbReference type="EC" id="2.1.1.264"/>
    </reaction>
</comment>
<comment type="subcellular location">
    <subcellularLocation>
        <location evidence="1">Cytoplasm</location>
    </subcellularLocation>
</comment>
<comment type="similarity">
    <text evidence="1">Belongs to the methyltransferase superfamily. RlmKL family.</text>
</comment>
<organism>
    <name type="scientific">Salmonella newport (strain SL254)</name>
    <dbReference type="NCBI Taxonomy" id="423368"/>
    <lineage>
        <taxon>Bacteria</taxon>
        <taxon>Pseudomonadati</taxon>
        <taxon>Pseudomonadota</taxon>
        <taxon>Gammaproteobacteria</taxon>
        <taxon>Enterobacterales</taxon>
        <taxon>Enterobacteriaceae</taxon>
        <taxon>Salmonella</taxon>
    </lineage>
</organism>
<proteinExistence type="inferred from homology"/>
<reference key="1">
    <citation type="journal article" date="2011" name="J. Bacteriol.">
        <title>Comparative genomics of 28 Salmonella enterica isolates: evidence for CRISPR-mediated adaptive sublineage evolution.</title>
        <authorList>
            <person name="Fricke W.F."/>
            <person name="Mammel M.K."/>
            <person name="McDermott P.F."/>
            <person name="Tartera C."/>
            <person name="White D.G."/>
            <person name="Leclerc J.E."/>
            <person name="Ravel J."/>
            <person name="Cebula T.A."/>
        </authorList>
    </citation>
    <scope>NUCLEOTIDE SEQUENCE [LARGE SCALE GENOMIC DNA]</scope>
    <source>
        <strain>SL254</strain>
    </source>
</reference>
<gene>
    <name evidence="1" type="primary">rlmL</name>
    <name type="ordered locus">SNSL254_A1102</name>
</gene>
<feature type="chain" id="PRO_0000366811" description="Ribosomal RNA large subunit methyltransferase K/L">
    <location>
        <begin position="1"/>
        <end position="702"/>
    </location>
</feature>
<feature type="domain" description="THUMP" evidence="1">
    <location>
        <begin position="43"/>
        <end position="154"/>
    </location>
</feature>
<keyword id="KW-0963">Cytoplasm</keyword>
<keyword id="KW-0489">Methyltransferase</keyword>
<keyword id="KW-0694">RNA-binding</keyword>
<keyword id="KW-0698">rRNA processing</keyword>
<keyword id="KW-0949">S-adenosyl-L-methionine</keyword>
<keyword id="KW-0808">Transferase</keyword>
<dbReference type="EC" id="2.1.1.173" evidence="1"/>
<dbReference type="EC" id="2.1.1.264" evidence="1"/>
<dbReference type="EMBL" id="CP001113">
    <property type="protein sequence ID" value="ACF63459.1"/>
    <property type="molecule type" value="Genomic_DNA"/>
</dbReference>
<dbReference type="SMR" id="B4T1Z1"/>
<dbReference type="KEGG" id="see:SNSL254_A1102"/>
<dbReference type="HOGENOM" id="CLU_014042_2_0_6"/>
<dbReference type="Proteomes" id="UP000008824">
    <property type="component" value="Chromosome"/>
</dbReference>
<dbReference type="GO" id="GO:0005737">
    <property type="term" value="C:cytoplasm"/>
    <property type="evidence" value="ECO:0007669"/>
    <property type="project" value="UniProtKB-SubCell"/>
</dbReference>
<dbReference type="GO" id="GO:0052915">
    <property type="term" value="F:23S rRNA (guanine(2445)-N(2))-methyltransferase activity"/>
    <property type="evidence" value="ECO:0007669"/>
    <property type="project" value="UniProtKB-UniRule"/>
</dbReference>
<dbReference type="GO" id="GO:0003723">
    <property type="term" value="F:RNA binding"/>
    <property type="evidence" value="ECO:0007669"/>
    <property type="project" value="UniProtKB-KW"/>
</dbReference>
<dbReference type="GO" id="GO:0070043">
    <property type="term" value="F:rRNA (guanine-N7-)-methyltransferase activity"/>
    <property type="evidence" value="ECO:0007669"/>
    <property type="project" value="UniProtKB-UniRule"/>
</dbReference>
<dbReference type="CDD" id="cd02440">
    <property type="entry name" value="AdoMet_MTases"/>
    <property type="match status" value="2"/>
</dbReference>
<dbReference type="CDD" id="cd11715">
    <property type="entry name" value="THUMP_AdoMetMT"/>
    <property type="match status" value="1"/>
</dbReference>
<dbReference type="FunFam" id="3.30.750.80:FF:000001">
    <property type="entry name" value="Ribosomal RNA large subunit methyltransferase K/L"/>
    <property type="match status" value="1"/>
</dbReference>
<dbReference type="FunFam" id="3.40.50.150:FF:000039">
    <property type="entry name" value="Ribosomal RNA large subunit methyltransferase K/L"/>
    <property type="match status" value="1"/>
</dbReference>
<dbReference type="Gene3D" id="3.30.2130.30">
    <property type="match status" value="1"/>
</dbReference>
<dbReference type="Gene3D" id="3.30.750.80">
    <property type="entry name" value="RNA methyltransferase domain (HRMD) like"/>
    <property type="match status" value="1"/>
</dbReference>
<dbReference type="Gene3D" id="3.40.50.150">
    <property type="entry name" value="Vaccinia Virus protein VP39"/>
    <property type="match status" value="2"/>
</dbReference>
<dbReference type="HAMAP" id="MF_01858">
    <property type="entry name" value="23SrRNA_methyltr_KL"/>
    <property type="match status" value="1"/>
</dbReference>
<dbReference type="InterPro" id="IPR017244">
    <property type="entry name" value="23SrRNA_methyltr_KL"/>
</dbReference>
<dbReference type="InterPro" id="IPR002052">
    <property type="entry name" value="DNA_methylase_N6_adenine_CS"/>
</dbReference>
<dbReference type="InterPro" id="IPR000241">
    <property type="entry name" value="RlmKL-like_Mtase"/>
</dbReference>
<dbReference type="InterPro" id="IPR053943">
    <property type="entry name" value="RlmKL-like_Mtase_CS"/>
</dbReference>
<dbReference type="InterPro" id="IPR054170">
    <property type="entry name" value="RlmL_1st"/>
</dbReference>
<dbReference type="InterPro" id="IPR019614">
    <property type="entry name" value="SAM-dep_methyl-trfase"/>
</dbReference>
<dbReference type="InterPro" id="IPR029063">
    <property type="entry name" value="SAM-dependent_MTases_sf"/>
</dbReference>
<dbReference type="InterPro" id="IPR004114">
    <property type="entry name" value="THUMP_dom"/>
</dbReference>
<dbReference type="NCBIfam" id="NF008748">
    <property type="entry name" value="PRK11783.1"/>
    <property type="match status" value="1"/>
</dbReference>
<dbReference type="PANTHER" id="PTHR47313">
    <property type="entry name" value="RIBOSOMAL RNA LARGE SUBUNIT METHYLTRANSFERASE K/L"/>
    <property type="match status" value="1"/>
</dbReference>
<dbReference type="PANTHER" id="PTHR47313:SF1">
    <property type="entry name" value="RIBOSOMAL RNA LARGE SUBUNIT METHYLTRANSFERASE K_L"/>
    <property type="match status" value="1"/>
</dbReference>
<dbReference type="Pfam" id="PF10672">
    <property type="entry name" value="Methyltrans_SAM"/>
    <property type="match status" value="1"/>
</dbReference>
<dbReference type="Pfam" id="PF22020">
    <property type="entry name" value="RlmL_1st"/>
    <property type="match status" value="1"/>
</dbReference>
<dbReference type="Pfam" id="PF02926">
    <property type="entry name" value="THUMP"/>
    <property type="match status" value="1"/>
</dbReference>
<dbReference type="Pfam" id="PF01170">
    <property type="entry name" value="UPF0020"/>
    <property type="match status" value="1"/>
</dbReference>
<dbReference type="PIRSF" id="PIRSF037618">
    <property type="entry name" value="RNA_Mtase_bacteria_prd"/>
    <property type="match status" value="1"/>
</dbReference>
<dbReference type="PRINTS" id="PR00507">
    <property type="entry name" value="N12N6MTFRASE"/>
</dbReference>
<dbReference type="SMART" id="SM00981">
    <property type="entry name" value="THUMP"/>
    <property type="match status" value="1"/>
</dbReference>
<dbReference type="SUPFAM" id="SSF53335">
    <property type="entry name" value="S-adenosyl-L-methionine-dependent methyltransferases"/>
    <property type="match status" value="2"/>
</dbReference>
<dbReference type="PROSITE" id="PS51165">
    <property type="entry name" value="THUMP"/>
    <property type="match status" value="1"/>
</dbReference>
<dbReference type="PROSITE" id="PS01261">
    <property type="entry name" value="UPF0020"/>
    <property type="match status" value="1"/>
</dbReference>
<name>RLMKL_SALNS</name>
<sequence>MNSLFASTARGLEELLKTELEKLGAVGCQVVQGGVHFQGDTRLIYQSLMWSRLASRIILPMGECKVYSDLDLYLGVQAINWTEIFNPGATFAVHFSGLNDTIRNSQYGAMKVKDAIVDAFTRKNLPRPNVDRESPDLRINVWLNKETASIALDLSGDGLHLRGYRDRTGLAPIKETLAAAIVMRSGWQPGTPLLDPMCGSGTLLIEAAMWATDRAPGLHRGHWGFSGWAQHDETIWQEVKAEAQTRARKGLAEYSSHFYGSDSDARVIERARSNARRAGIGELITFEVKDVAQLSNPLPKGPYGTVISNPPYGERLDSEPALIALHSLLGRTMKNQFGGWNLSLFSASPDLLGSLQLRADKQFKAKNGPLDCVQKNYHIAETTADSKPATVAEDYANRLRKNLKKLEKWARQEGIECYRLYDADLPEYNVAVDRYGDWAVIQEYAPPKTVDAQKARQRLFDIIAATLSVLGIPPNKLVLKTRERQKGKNQYQKMSEKGEFLEVSEYNARLWVNLTDYLDTGLFLDHRIARRMLGEMSKGKDFLNLFSYTGSASVHAGLGGARSTTTVDMSRTYLEWAERNLRLNGLSGRAHRLIQADCLGWLREANEQFDLIFIDPPTFSNSKRMEESFDVQRDHVALMKDLKRLLRKGGTIMFSNNKRGFRMDLEGLAELGLTAQEITQKTLSPDFARNRQIHNCWLIRAA</sequence>